<evidence type="ECO:0000255" key="1">
    <source>
        <dbReference type="HAMAP-Rule" id="MF_01872"/>
    </source>
</evidence>
<evidence type="ECO:0000305" key="2"/>
<name>TRMN6_CROS8</name>
<comment type="function">
    <text evidence="1">Specifically methylates the adenine in position 37 of tRNA(1)(Val) (anticodon cmo5UAC).</text>
</comment>
<comment type="catalytic activity">
    <reaction evidence="1">
        <text>adenosine(37) in tRNA1(Val) + S-adenosyl-L-methionine = N(6)-methyladenosine(37) in tRNA1(Val) + S-adenosyl-L-homocysteine + H(+)</text>
        <dbReference type="Rhea" id="RHEA:43160"/>
        <dbReference type="Rhea" id="RHEA-COMP:10369"/>
        <dbReference type="Rhea" id="RHEA-COMP:10370"/>
        <dbReference type="ChEBI" id="CHEBI:15378"/>
        <dbReference type="ChEBI" id="CHEBI:57856"/>
        <dbReference type="ChEBI" id="CHEBI:59789"/>
        <dbReference type="ChEBI" id="CHEBI:74411"/>
        <dbReference type="ChEBI" id="CHEBI:74449"/>
        <dbReference type="EC" id="2.1.1.223"/>
    </reaction>
</comment>
<comment type="subcellular location">
    <subcellularLocation>
        <location evidence="1">Cytoplasm</location>
    </subcellularLocation>
</comment>
<comment type="similarity">
    <text evidence="1">Belongs to the methyltransferase superfamily. tRNA (adenine-N(6)-)-methyltransferase family.</text>
</comment>
<comment type="sequence caution" evidence="2">
    <conflict type="erroneous initiation">
        <sequence resource="EMBL-CDS" id="ABU75962"/>
    </conflict>
</comment>
<organism>
    <name type="scientific">Cronobacter sakazakii (strain ATCC BAA-894)</name>
    <name type="common">Enterobacter sakazakii</name>
    <dbReference type="NCBI Taxonomy" id="290339"/>
    <lineage>
        <taxon>Bacteria</taxon>
        <taxon>Pseudomonadati</taxon>
        <taxon>Pseudomonadota</taxon>
        <taxon>Gammaproteobacteria</taxon>
        <taxon>Enterobacterales</taxon>
        <taxon>Enterobacteriaceae</taxon>
        <taxon>Cronobacter</taxon>
    </lineage>
</organism>
<sequence>MSQPKTPLRRNGFTFKQFFVAHDRCAMKVGTDGILLGAWAPVAKAQRVLDIGAGSGLLTLMLAQRTEDTVTLDAVELDAQAAEQARENIDASPWAARIQVHSADIQTWTQQQTQRYELIVSNPPYYDKGVACATPAREQARYTTTLDHGTLLACAAQLITEEGFFCVVLPESSGEAFSRLAGEQGWHLRLRTDVAENAGKLPHRVLLAFSPSPGECFCDDLLIRGPDQHYSPAYCALTEAFYLFM</sequence>
<keyword id="KW-0963">Cytoplasm</keyword>
<keyword id="KW-0489">Methyltransferase</keyword>
<keyword id="KW-1185">Reference proteome</keyword>
<keyword id="KW-0949">S-adenosyl-L-methionine</keyword>
<keyword id="KW-0808">Transferase</keyword>
<keyword id="KW-0819">tRNA processing</keyword>
<proteinExistence type="inferred from homology"/>
<accession>A7MH06</accession>
<dbReference type="EC" id="2.1.1.223" evidence="1"/>
<dbReference type="EMBL" id="CP000783">
    <property type="protein sequence ID" value="ABU75962.1"/>
    <property type="status" value="ALT_INIT"/>
    <property type="molecule type" value="Genomic_DNA"/>
</dbReference>
<dbReference type="SMR" id="A7MH06"/>
<dbReference type="KEGG" id="esa:ESA_00683"/>
<dbReference type="PATRIC" id="fig|290339.8.peg.602"/>
<dbReference type="HOGENOM" id="CLU_061983_0_0_6"/>
<dbReference type="Proteomes" id="UP000000260">
    <property type="component" value="Chromosome"/>
</dbReference>
<dbReference type="GO" id="GO:0005737">
    <property type="term" value="C:cytoplasm"/>
    <property type="evidence" value="ECO:0007669"/>
    <property type="project" value="UniProtKB-SubCell"/>
</dbReference>
<dbReference type="GO" id="GO:0003676">
    <property type="term" value="F:nucleic acid binding"/>
    <property type="evidence" value="ECO:0007669"/>
    <property type="project" value="InterPro"/>
</dbReference>
<dbReference type="GO" id="GO:0000179">
    <property type="term" value="F:rRNA (adenine-N6,N6-)-dimethyltransferase activity"/>
    <property type="evidence" value="ECO:0007669"/>
    <property type="project" value="InterPro"/>
</dbReference>
<dbReference type="GO" id="GO:0016430">
    <property type="term" value="F:tRNA (adenine-N6)-methyltransferase activity"/>
    <property type="evidence" value="ECO:0007669"/>
    <property type="project" value="UniProtKB-UniRule"/>
</dbReference>
<dbReference type="GO" id="GO:0008033">
    <property type="term" value="P:tRNA processing"/>
    <property type="evidence" value="ECO:0007669"/>
    <property type="project" value="UniProtKB-UniRule"/>
</dbReference>
<dbReference type="CDD" id="cd02440">
    <property type="entry name" value="AdoMet_MTases"/>
    <property type="match status" value="1"/>
</dbReference>
<dbReference type="Gene3D" id="3.40.50.150">
    <property type="entry name" value="Vaccinia Virus protein VP39"/>
    <property type="match status" value="1"/>
</dbReference>
<dbReference type="HAMAP" id="MF_01872">
    <property type="entry name" value="tRNA_methyltr_YfiC"/>
    <property type="match status" value="1"/>
</dbReference>
<dbReference type="InterPro" id="IPR002052">
    <property type="entry name" value="DNA_methylase_N6_adenine_CS"/>
</dbReference>
<dbReference type="InterPro" id="IPR020596">
    <property type="entry name" value="rRNA_Ade_Mease_Trfase_CS"/>
</dbReference>
<dbReference type="InterPro" id="IPR029063">
    <property type="entry name" value="SAM-dependent_MTases_sf"/>
</dbReference>
<dbReference type="InterPro" id="IPR007848">
    <property type="entry name" value="Small_mtfrase_dom"/>
</dbReference>
<dbReference type="InterPro" id="IPR050210">
    <property type="entry name" value="tRNA_Adenine-N(6)_MTase"/>
</dbReference>
<dbReference type="InterPro" id="IPR022882">
    <property type="entry name" value="tRNA_adenine-N6_MeTrfase"/>
</dbReference>
<dbReference type="NCBIfam" id="NF047853">
    <property type="entry name" value="tRm6a37MtseTrmN"/>
    <property type="match status" value="1"/>
</dbReference>
<dbReference type="PANTHER" id="PTHR47739">
    <property type="entry name" value="TRNA1(VAL) (ADENINE(37)-N6)-METHYLTRANSFERASE"/>
    <property type="match status" value="1"/>
</dbReference>
<dbReference type="PANTHER" id="PTHR47739:SF1">
    <property type="entry name" value="TRNA1(VAL) (ADENINE(37)-N6)-METHYLTRANSFERASE"/>
    <property type="match status" value="1"/>
</dbReference>
<dbReference type="Pfam" id="PF05175">
    <property type="entry name" value="MTS"/>
    <property type="match status" value="1"/>
</dbReference>
<dbReference type="SUPFAM" id="SSF53335">
    <property type="entry name" value="S-adenosyl-L-methionine-dependent methyltransferases"/>
    <property type="match status" value="1"/>
</dbReference>
<dbReference type="PROSITE" id="PS00092">
    <property type="entry name" value="N6_MTASE"/>
    <property type="match status" value="1"/>
</dbReference>
<gene>
    <name type="ordered locus">ESA_00683</name>
</gene>
<reference key="1">
    <citation type="journal article" date="2010" name="PLoS ONE">
        <title>Genome sequence of Cronobacter sakazakii BAA-894 and comparative genomic hybridization analysis with other Cronobacter species.</title>
        <authorList>
            <person name="Kucerova E."/>
            <person name="Clifton S.W."/>
            <person name="Xia X.Q."/>
            <person name="Long F."/>
            <person name="Porwollik S."/>
            <person name="Fulton L."/>
            <person name="Fronick C."/>
            <person name="Minx P."/>
            <person name="Kyung K."/>
            <person name="Warren W."/>
            <person name="Fulton R."/>
            <person name="Feng D."/>
            <person name="Wollam A."/>
            <person name="Shah N."/>
            <person name="Bhonagiri V."/>
            <person name="Nash W.E."/>
            <person name="Hallsworth-Pepin K."/>
            <person name="Wilson R.K."/>
            <person name="McClelland M."/>
            <person name="Forsythe S.J."/>
        </authorList>
    </citation>
    <scope>NUCLEOTIDE SEQUENCE [LARGE SCALE GENOMIC DNA]</scope>
    <source>
        <strain>ATCC BAA-894</strain>
    </source>
</reference>
<protein>
    <recommendedName>
        <fullName evidence="1">tRNA1(Val) (adenine(37)-N6)-methyltransferase</fullName>
        <ecNumber evidence="1">2.1.1.223</ecNumber>
    </recommendedName>
    <alternativeName>
        <fullName evidence="1">tRNA m6A37 methyltransferase</fullName>
    </alternativeName>
</protein>
<feature type="chain" id="PRO_0000387351" description="tRNA1(Val) (adenine(37)-N6)-methyltransferase">
    <location>
        <begin position="1"/>
        <end position="245"/>
    </location>
</feature>